<evidence type="ECO:0000255" key="1">
    <source>
        <dbReference type="HAMAP-Rule" id="MF_00601"/>
    </source>
</evidence>
<protein>
    <recommendedName>
        <fullName evidence="1">Ethanolamine ammonia-lyase small subunit</fullName>
        <shortName evidence="1">EAL small subunit</shortName>
        <ecNumber evidence="1">4.3.1.7</ecNumber>
    </recommendedName>
</protein>
<proteinExistence type="inferred from homology"/>
<gene>
    <name evidence="1" type="primary">eutC</name>
    <name type="ordered locus">Ecok1_23500</name>
    <name type="ORF">APECO1_4108</name>
</gene>
<sequence length="295" mass="31782">MDQKQIEEIVRSVMASMGQAAPAPSEAKCATTNCAAPVTSESCALDLGSAEAKAWIGVENPHRADVLTELRRSTVARVCTGRAGPRPRTQALLRFLADHSRSKDTVLKEVPEEWVKAQGLLEVRSEISDKNLYLTRPDMGRRLCAEAVEALKAQCVANPDVQVVISDGLSTDAITVNYEEILPPLMAGLKQAGLKVGTPFFVRYGRVKIEDQIGEILGAKVVILLVGERPGLGQSESLSCYAVYSPRMATTVEADRTCISNIHQGGTPPVEAAAVIVDLAKRMLEQKASGINMTR</sequence>
<comment type="function">
    <text evidence="1">Catalyzes the deamination of various vicinal amino-alcohols to oxo compounds. Allows this organism to utilize ethanolamine as the sole source of nitrogen and carbon in the presence of external vitamin B12.</text>
</comment>
<comment type="catalytic activity">
    <reaction evidence="1">
        <text>ethanolamine = acetaldehyde + NH4(+)</text>
        <dbReference type="Rhea" id="RHEA:15313"/>
        <dbReference type="ChEBI" id="CHEBI:15343"/>
        <dbReference type="ChEBI" id="CHEBI:28938"/>
        <dbReference type="ChEBI" id="CHEBI:57603"/>
        <dbReference type="EC" id="4.3.1.7"/>
    </reaction>
</comment>
<comment type="cofactor">
    <cofactor evidence="1">
        <name>adenosylcob(III)alamin</name>
        <dbReference type="ChEBI" id="CHEBI:18408"/>
    </cofactor>
    <text evidence="1">Binds between the large and small subunits.</text>
</comment>
<comment type="pathway">
    <text evidence="1">Amine and polyamine degradation; ethanolamine degradation.</text>
</comment>
<comment type="subunit">
    <text evidence="1">The basic unit is a heterodimer which dimerizes to form tetramers. The heterotetramers trimerize; 6 large subunits form a core ring with 6 small subunits projecting outwards.</text>
</comment>
<comment type="subcellular location">
    <subcellularLocation>
        <location evidence="1">Bacterial microcompartment</location>
    </subcellularLocation>
</comment>
<comment type="similarity">
    <text evidence="1">Belongs to the EutC family.</text>
</comment>
<keyword id="KW-1283">Bacterial microcompartment</keyword>
<keyword id="KW-0846">Cobalamin</keyword>
<keyword id="KW-0170">Cobalt</keyword>
<keyword id="KW-0456">Lyase</keyword>
<keyword id="KW-1185">Reference proteome</keyword>
<organism>
    <name type="scientific">Escherichia coli O1:K1 / APEC</name>
    <dbReference type="NCBI Taxonomy" id="405955"/>
    <lineage>
        <taxon>Bacteria</taxon>
        <taxon>Pseudomonadati</taxon>
        <taxon>Pseudomonadota</taxon>
        <taxon>Gammaproteobacteria</taxon>
        <taxon>Enterobacterales</taxon>
        <taxon>Enterobacteriaceae</taxon>
        <taxon>Escherichia</taxon>
    </lineage>
</organism>
<reference key="1">
    <citation type="journal article" date="2007" name="J. Bacteriol.">
        <title>The genome sequence of avian pathogenic Escherichia coli strain O1:K1:H7 shares strong similarities with human extraintestinal pathogenic E. coli genomes.</title>
        <authorList>
            <person name="Johnson T.J."/>
            <person name="Kariyawasam S."/>
            <person name="Wannemuehler Y."/>
            <person name="Mangiamele P."/>
            <person name="Johnson S.J."/>
            <person name="Doetkott C."/>
            <person name="Skyberg J.A."/>
            <person name="Lynne A.M."/>
            <person name="Johnson J.R."/>
            <person name="Nolan L.K."/>
        </authorList>
    </citation>
    <scope>NUCLEOTIDE SEQUENCE [LARGE SCALE GENOMIC DNA]</scope>
</reference>
<name>EUTC_ECOK1</name>
<feature type="chain" id="PRO_1000025853" description="Ethanolamine ammonia-lyase small subunit">
    <location>
        <begin position="1"/>
        <end position="295"/>
    </location>
</feature>
<feature type="binding site" evidence="1">
    <location>
        <position position="207"/>
    </location>
    <ligand>
        <name>adenosylcob(III)alamin</name>
        <dbReference type="ChEBI" id="CHEBI:18408"/>
    </ligand>
</feature>
<feature type="binding site" evidence="1">
    <location>
        <position position="228"/>
    </location>
    <ligand>
        <name>adenosylcob(III)alamin</name>
        <dbReference type="ChEBI" id="CHEBI:18408"/>
    </ligand>
</feature>
<feature type="binding site" evidence="1">
    <location>
        <position position="258"/>
    </location>
    <ligand>
        <name>adenosylcob(III)alamin</name>
        <dbReference type="ChEBI" id="CHEBI:18408"/>
    </ligand>
</feature>
<dbReference type="EC" id="4.3.1.7" evidence="1"/>
<dbReference type="EMBL" id="CP000468">
    <property type="protein sequence ID" value="ABJ01844.1"/>
    <property type="molecule type" value="Genomic_DNA"/>
</dbReference>
<dbReference type="RefSeq" id="WP_000372316.1">
    <property type="nucleotide sequence ID" value="NZ_CADILS010000039.1"/>
</dbReference>
<dbReference type="SMR" id="A1ADV4"/>
<dbReference type="KEGG" id="ecv:APECO1_4108"/>
<dbReference type="HOGENOM" id="CLU_068224_0_0_6"/>
<dbReference type="UniPathway" id="UPA00560"/>
<dbReference type="Proteomes" id="UP000008216">
    <property type="component" value="Chromosome"/>
</dbReference>
<dbReference type="GO" id="GO:0009350">
    <property type="term" value="C:ethanolamine ammonia-lyase complex"/>
    <property type="evidence" value="ECO:0007669"/>
    <property type="project" value="UniProtKB-UniRule"/>
</dbReference>
<dbReference type="GO" id="GO:0031471">
    <property type="term" value="C:ethanolamine degradation polyhedral organelle"/>
    <property type="evidence" value="ECO:0007669"/>
    <property type="project" value="UniProtKB-UniRule"/>
</dbReference>
<dbReference type="GO" id="GO:0031419">
    <property type="term" value="F:cobalamin binding"/>
    <property type="evidence" value="ECO:0007669"/>
    <property type="project" value="UniProtKB-UniRule"/>
</dbReference>
<dbReference type="GO" id="GO:0008851">
    <property type="term" value="F:ethanolamine ammonia-lyase activity"/>
    <property type="evidence" value="ECO:0007669"/>
    <property type="project" value="UniProtKB-UniRule"/>
</dbReference>
<dbReference type="GO" id="GO:0006520">
    <property type="term" value="P:amino acid metabolic process"/>
    <property type="evidence" value="ECO:0007669"/>
    <property type="project" value="InterPro"/>
</dbReference>
<dbReference type="GO" id="GO:0046336">
    <property type="term" value="P:ethanolamine catabolic process"/>
    <property type="evidence" value="ECO:0007669"/>
    <property type="project" value="UniProtKB-UniRule"/>
</dbReference>
<dbReference type="FunFam" id="3.40.50.11240:FF:000001">
    <property type="entry name" value="Ethanolamine ammonia-lyase light chain"/>
    <property type="match status" value="1"/>
</dbReference>
<dbReference type="Gene3D" id="6.10.140.690">
    <property type="match status" value="1"/>
</dbReference>
<dbReference type="Gene3D" id="6.10.250.2060">
    <property type="match status" value="1"/>
</dbReference>
<dbReference type="Gene3D" id="3.40.50.11240">
    <property type="entry name" value="Ethanolamine ammonia-lyase light chain (EutC)"/>
    <property type="match status" value="1"/>
</dbReference>
<dbReference type="HAMAP" id="MF_00601">
    <property type="entry name" value="EutC"/>
    <property type="match status" value="1"/>
</dbReference>
<dbReference type="InterPro" id="IPR009246">
    <property type="entry name" value="EutC"/>
</dbReference>
<dbReference type="InterPro" id="IPR042251">
    <property type="entry name" value="EutC_C"/>
</dbReference>
<dbReference type="NCBIfam" id="NF003971">
    <property type="entry name" value="PRK05465.1"/>
    <property type="match status" value="1"/>
</dbReference>
<dbReference type="PANTHER" id="PTHR39330">
    <property type="entry name" value="ETHANOLAMINE AMMONIA-LYASE LIGHT CHAIN"/>
    <property type="match status" value="1"/>
</dbReference>
<dbReference type="PANTHER" id="PTHR39330:SF1">
    <property type="entry name" value="ETHANOLAMINE AMMONIA-LYASE SMALL SUBUNIT"/>
    <property type="match status" value="1"/>
</dbReference>
<dbReference type="Pfam" id="PF05985">
    <property type="entry name" value="EutC"/>
    <property type="match status" value="1"/>
</dbReference>
<dbReference type="PIRSF" id="PIRSF018982">
    <property type="entry name" value="EutC"/>
    <property type="match status" value="1"/>
</dbReference>
<accession>A1ADV4</accession>